<comment type="function">
    <text evidence="4">Catalyzes the epimerization of the C3' and C5'positions of dTDP-6-deoxy-D-xylo-4-hexulose, forming dTDP-6-deoxy-L-lyxo-4-hexulose.</text>
</comment>
<comment type="catalytic activity">
    <reaction evidence="4">
        <text>dTDP-4-dehydro-6-deoxy-alpha-D-glucose = dTDP-4-dehydro-beta-L-rhamnose</text>
        <dbReference type="Rhea" id="RHEA:16969"/>
        <dbReference type="ChEBI" id="CHEBI:57649"/>
        <dbReference type="ChEBI" id="CHEBI:62830"/>
        <dbReference type="EC" id="5.1.3.13"/>
    </reaction>
</comment>
<comment type="pathway">
    <text evidence="1">Carbohydrate biosynthesis; dTDP-L-rhamnose biosynthesis.</text>
</comment>
<comment type="subunit">
    <text evidence="4">Homodimer.</text>
</comment>
<comment type="similarity">
    <text evidence="6">Belongs to the dTDP-4-dehydrorhamnose 3,5-epimerase family.</text>
</comment>
<name>RMLC_METTH</name>
<gene>
    <name type="primary">rmlC</name>
    <name type="ordered locus">MTH_1790</name>
</gene>
<proteinExistence type="evidence at protein level"/>
<organism>
    <name type="scientific">Methanothermobacter thermautotrophicus (strain ATCC 29096 / DSM 1053 / JCM 10044 / NBRC 100330 / Delta H)</name>
    <name type="common">Methanobacterium thermoautotrophicum</name>
    <dbReference type="NCBI Taxonomy" id="187420"/>
    <lineage>
        <taxon>Archaea</taxon>
        <taxon>Methanobacteriati</taxon>
        <taxon>Methanobacteriota</taxon>
        <taxon>Methanomada group</taxon>
        <taxon>Methanobacteria</taxon>
        <taxon>Methanobacteriales</taxon>
        <taxon>Methanobacteriaceae</taxon>
        <taxon>Methanothermobacter</taxon>
    </lineage>
</organism>
<sequence>MAEFRFIKTSLDGAIIIEPEVYTDERGYFMETFNEAIFQENGLEVRFVQDNESMSVRGVLRGLHFQREKPQGKLVRVIRGEIFDVAVDLRKNSDTYGEWTGVRLSDENRREFFIPEGFAHGFLALSDECIVNYKCTELYHPEYDSGIPWDDPDIGIDWPLEMVDDLIISEKDRNWKPLRENPVYL</sequence>
<accession>O27818</accession>
<keyword id="KW-0002">3D-structure</keyword>
<keyword id="KW-0119">Carbohydrate metabolism</keyword>
<keyword id="KW-0413">Isomerase</keyword>
<keyword id="KW-1185">Reference proteome</keyword>
<dbReference type="EC" id="5.1.3.13" evidence="4"/>
<dbReference type="EMBL" id="AE000666">
    <property type="protein sequence ID" value="AAB86256.1"/>
    <property type="molecule type" value="Genomic_DNA"/>
</dbReference>
<dbReference type="PIR" id="B69106">
    <property type="entry name" value="B69106"/>
</dbReference>
<dbReference type="RefSeq" id="WP_010877392.1">
    <property type="nucleotide sequence ID" value="NC_000916.1"/>
</dbReference>
<dbReference type="PDB" id="1EP0">
    <property type="method" value="X-ray"/>
    <property type="resolution" value="1.50 A"/>
    <property type="chains" value="A=1-185"/>
</dbReference>
<dbReference type="PDB" id="1EPZ">
    <property type="method" value="X-ray"/>
    <property type="resolution" value="1.75 A"/>
    <property type="chains" value="A=1-185"/>
</dbReference>
<dbReference type="PDBsum" id="1EP0"/>
<dbReference type="PDBsum" id="1EPZ"/>
<dbReference type="SMR" id="O27818"/>
<dbReference type="STRING" id="187420.MTH_1790"/>
<dbReference type="PaxDb" id="187420-MTH_1790"/>
<dbReference type="EnsemblBacteria" id="AAB86256">
    <property type="protein sequence ID" value="AAB86256"/>
    <property type="gene ID" value="MTH_1790"/>
</dbReference>
<dbReference type="GeneID" id="1470875"/>
<dbReference type="KEGG" id="mth:MTH_1790"/>
<dbReference type="PATRIC" id="fig|187420.15.peg.1745"/>
<dbReference type="HOGENOM" id="CLU_090940_1_1_2"/>
<dbReference type="InParanoid" id="O27818"/>
<dbReference type="UniPathway" id="UPA00124"/>
<dbReference type="EvolutionaryTrace" id="O27818"/>
<dbReference type="Proteomes" id="UP000005223">
    <property type="component" value="Chromosome"/>
</dbReference>
<dbReference type="GO" id="GO:0005829">
    <property type="term" value="C:cytosol"/>
    <property type="evidence" value="ECO:0007669"/>
    <property type="project" value="TreeGrafter"/>
</dbReference>
<dbReference type="GO" id="GO:0008830">
    <property type="term" value="F:dTDP-4-dehydrorhamnose 3,5-epimerase activity"/>
    <property type="evidence" value="ECO:0000303"/>
    <property type="project" value="UniProtKB"/>
</dbReference>
<dbReference type="GO" id="GO:0019305">
    <property type="term" value="P:dTDP-rhamnose biosynthetic process"/>
    <property type="evidence" value="ECO:0007669"/>
    <property type="project" value="UniProtKB-UniPathway"/>
</dbReference>
<dbReference type="GO" id="GO:0000271">
    <property type="term" value="P:polysaccharide biosynthetic process"/>
    <property type="evidence" value="ECO:0000303"/>
    <property type="project" value="UniProtKB"/>
</dbReference>
<dbReference type="CDD" id="cd00438">
    <property type="entry name" value="cupin_RmlC"/>
    <property type="match status" value="1"/>
</dbReference>
<dbReference type="Gene3D" id="2.60.120.10">
    <property type="entry name" value="Jelly Rolls"/>
    <property type="match status" value="1"/>
</dbReference>
<dbReference type="InterPro" id="IPR000888">
    <property type="entry name" value="RmlC-like"/>
</dbReference>
<dbReference type="InterPro" id="IPR014710">
    <property type="entry name" value="RmlC-like_jellyroll"/>
</dbReference>
<dbReference type="InterPro" id="IPR011051">
    <property type="entry name" value="RmlC_Cupin_sf"/>
</dbReference>
<dbReference type="NCBIfam" id="TIGR01221">
    <property type="entry name" value="rmlC"/>
    <property type="match status" value="1"/>
</dbReference>
<dbReference type="PANTHER" id="PTHR21047">
    <property type="entry name" value="DTDP-6-DEOXY-D-GLUCOSE-3,5 EPIMERASE"/>
    <property type="match status" value="1"/>
</dbReference>
<dbReference type="PANTHER" id="PTHR21047:SF2">
    <property type="entry name" value="THYMIDINE DIPHOSPHO-4-KETO-RHAMNOSE 3,5-EPIMERASE"/>
    <property type="match status" value="1"/>
</dbReference>
<dbReference type="Pfam" id="PF00908">
    <property type="entry name" value="dTDP_sugar_isom"/>
    <property type="match status" value="1"/>
</dbReference>
<dbReference type="SUPFAM" id="SSF51182">
    <property type="entry name" value="RmlC-like cupins"/>
    <property type="match status" value="1"/>
</dbReference>
<evidence type="ECO:0000250" key="1">
    <source>
        <dbReference type="UniProtKB" id="P26394"/>
    </source>
</evidence>
<evidence type="ECO:0000250" key="2">
    <source>
        <dbReference type="UniProtKB" id="Q5SFD1"/>
    </source>
</evidence>
<evidence type="ECO:0000250" key="3">
    <source>
        <dbReference type="UniProtKB" id="Q9HU21"/>
    </source>
</evidence>
<evidence type="ECO:0000269" key="4">
    <source>
    </source>
</evidence>
<evidence type="ECO:0000303" key="5">
    <source>
    </source>
</evidence>
<evidence type="ECO:0000305" key="6"/>
<evidence type="ECO:0000305" key="7">
    <source>
    </source>
</evidence>
<evidence type="ECO:0007744" key="8">
    <source>
        <dbReference type="PDB" id="1EPZ"/>
    </source>
</evidence>
<evidence type="ECO:0007829" key="9">
    <source>
        <dbReference type="PDB" id="1EP0"/>
    </source>
</evidence>
<protein>
    <recommendedName>
        <fullName evidence="7">dTDP-4-dehydrorhamnose 3,5-epimerase</fullName>
        <ecNumber evidence="4">5.1.3.13</ecNumber>
    </recommendedName>
    <alternativeName>
        <fullName evidence="7">Thymidine diphospho-4-keto-rhamnose 3,5-epimerase</fullName>
    </alternativeName>
    <alternativeName>
        <fullName evidence="5">dTDP-4-keto-6-deoxyglucose 3,5-epimerase</fullName>
    </alternativeName>
    <alternativeName>
        <fullName evidence="7">dTDP-6-deoxy-D-xylo-4-hexulose 3,5-epimerase</fullName>
    </alternativeName>
    <alternativeName>
        <fullName evidence="7">dTDP-L-rhamnose synthase</fullName>
    </alternativeName>
</protein>
<feature type="chain" id="PRO_0000395351" description="dTDP-4-dehydrorhamnose 3,5-epimerase">
    <location>
        <begin position="1"/>
        <end position="185"/>
    </location>
</feature>
<feature type="active site" description="Proton acceptor" evidence="7">
    <location>
        <position position="64"/>
    </location>
</feature>
<feature type="active site" description="Proton donor" evidence="3">
    <location>
        <position position="133"/>
    </location>
</feature>
<feature type="binding site" evidence="3">
    <location>
        <position position="26"/>
    </location>
    <ligand>
        <name>substrate</name>
    </ligand>
</feature>
<feature type="binding site" evidence="3">
    <location>
        <position position="31"/>
    </location>
    <ligand>
        <name>substrate</name>
    </ligand>
</feature>
<feature type="binding site" evidence="4 8">
    <location>
        <begin position="49"/>
        <end position="51"/>
    </location>
    <ligand>
        <name>substrate</name>
    </ligand>
</feature>
<feature type="binding site" evidence="4 8">
    <location>
        <position position="61"/>
    </location>
    <ligand>
        <name>substrate</name>
    </ligand>
</feature>
<feature type="binding site" evidence="3">
    <location>
        <position position="73"/>
    </location>
    <ligand>
        <name>substrate</name>
    </ligand>
</feature>
<feature type="binding site" evidence="3">
    <location>
        <position position="120"/>
    </location>
    <ligand>
        <name>substrate</name>
    </ligand>
</feature>
<feature type="binding site" evidence="3">
    <location>
        <position position="144"/>
    </location>
    <ligand>
        <name>substrate</name>
    </ligand>
</feature>
<feature type="binding site" evidence="3">
    <location>
        <position position="171"/>
    </location>
    <ligand>
        <name>substrate</name>
    </ligand>
</feature>
<feature type="site" description="Participates in a stacking interaction with the thymidine ring of dTDP-4-oxo-6-deoxyglucose" evidence="2">
    <location>
        <position position="139"/>
    </location>
</feature>
<feature type="strand" evidence="9">
    <location>
        <begin position="4"/>
        <end position="8"/>
    </location>
</feature>
<feature type="strand" evidence="9">
    <location>
        <begin position="15"/>
        <end position="19"/>
    </location>
</feature>
<feature type="strand" evidence="9">
    <location>
        <begin position="21"/>
        <end position="24"/>
    </location>
</feature>
<feature type="strand" evidence="9">
    <location>
        <begin position="27"/>
        <end position="30"/>
    </location>
</feature>
<feature type="helix" evidence="9">
    <location>
        <begin position="35"/>
        <end position="40"/>
    </location>
</feature>
<feature type="strand" evidence="9">
    <location>
        <begin position="49"/>
        <end position="56"/>
    </location>
</feature>
<feature type="strand" evidence="9">
    <location>
        <begin position="59"/>
        <end position="69"/>
    </location>
</feature>
<feature type="strand" evidence="9">
    <location>
        <begin position="73"/>
        <end position="88"/>
    </location>
</feature>
<feature type="turn" evidence="9">
    <location>
        <begin position="94"/>
        <end position="97"/>
    </location>
</feature>
<feature type="strand" evidence="9">
    <location>
        <begin position="99"/>
        <end position="105"/>
    </location>
</feature>
<feature type="turn" evidence="9">
    <location>
        <begin position="106"/>
        <end position="108"/>
    </location>
</feature>
<feature type="strand" evidence="9">
    <location>
        <begin position="111"/>
        <end position="114"/>
    </location>
</feature>
<feature type="strand" evidence="9">
    <location>
        <begin position="118"/>
        <end position="124"/>
    </location>
</feature>
<feature type="strand" evidence="9">
    <location>
        <begin position="126"/>
        <end position="137"/>
    </location>
</feature>
<feature type="helix" evidence="9">
    <location>
        <begin position="141"/>
        <end position="143"/>
    </location>
</feature>
<feature type="strand" evidence="9">
    <location>
        <begin position="144"/>
        <end position="146"/>
    </location>
</feature>
<feature type="turn" evidence="9">
    <location>
        <begin position="152"/>
        <end position="154"/>
    </location>
</feature>
<feature type="helix" evidence="9">
    <location>
        <begin position="160"/>
        <end position="162"/>
    </location>
</feature>
<feature type="helix" evidence="9">
    <location>
        <begin position="170"/>
        <end position="173"/>
    </location>
</feature>
<feature type="turn" evidence="9">
    <location>
        <begin position="178"/>
        <end position="180"/>
    </location>
</feature>
<reference key="1">
    <citation type="journal article" date="1997" name="J. Bacteriol.">
        <title>Complete genome sequence of Methanobacterium thermoautotrophicum deltaH: functional analysis and comparative genomics.</title>
        <authorList>
            <person name="Smith D.R."/>
            <person name="Doucette-Stamm L.A."/>
            <person name="Deloughery C."/>
            <person name="Lee H.-M."/>
            <person name="Dubois J."/>
            <person name="Aldredge T."/>
            <person name="Bashirzadeh R."/>
            <person name="Blakely D."/>
            <person name="Cook R."/>
            <person name="Gilbert K."/>
            <person name="Harrison D."/>
            <person name="Hoang L."/>
            <person name="Keagle P."/>
            <person name="Lumm W."/>
            <person name="Pothier B."/>
            <person name="Qiu D."/>
            <person name="Spadafora R."/>
            <person name="Vicare R."/>
            <person name="Wang Y."/>
            <person name="Wierzbowski J."/>
            <person name="Gibson R."/>
            <person name="Jiwani N."/>
            <person name="Caruso A."/>
            <person name="Bush D."/>
            <person name="Safer H."/>
            <person name="Patwell D."/>
            <person name="Prabhakar S."/>
            <person name="McDougall S."/>
            <person name="Shimer G."/>
            <person name="Goyal A."/>
            <person name="Pietrovski S."/>
            <person name="Church G.M."/>
            <person name="Daniels C.J."/>
            <person name="Mao J.-I."/>
            <person name="Rice P."/>
            <person name="Noelling J."/>
            <person name="Reeve J.N."/>
        </authorList>
    </citation>
    <scope>NUCLEOTIDE SEQUENCE [LARGE SCALE GENOMIC DNA]</scope>
    <source>
        <strain>ATCC 29096 / DSM 1053 / JCM 10044 / NBRC 100330 / Delta H</strain>
    </source>
</reference>
<reference key="2">
    <citation type="journal article" date="2000" name="J. Biol. Chem.">
        <title>Crystal structure of dTDP-4-keto-6-deoxy-D-hexulose 3,5-epimerase from Methanobacterium thermoautotrophicum complexed with dTDP.</title>
        <authorList>
            <person name="Christendat D."/>
            <person name="Saridakis V."/>
            <person name="Dharamsi A."/>
            <person name="Bochkarev A."/>
            <person name="Pai E.F."/>
            <person name="Arrowsmith C.H."/>
            <person name="Edwards A.M."/>
        </authorList>
    </citation>
    <scope>X-RAY CRYSTALLOGRAPHY (1.5 ANGSTROMS) IN COMPLEX WITH SUBSTRATE ANALOG</scope>
    <scope>FUNCTION IN DTDP-RHAMNOSE BIOSYNTHESIS</scope>
    <scope>CATALYTIC ACTIVITY</scope>
    <scope>ACTIVE SITE</scope>
    <scope>SUBUNIT</scope>
</reference>